<protein>
    <recommendedName>
        <fullName evidence="1">UPF0259 membrane protein YciC</fullName>
    </recommendedName>
</protein>
<evidence type="ECO:0000255" key="1">
    <source>
        <dbReference type="HAMAP-Rule" id="MF_01067"/>
    </source>
</evidence>
<sequence>MSITAQSVYRDTGNFFRNQFMTILLVSLLCAFITVVLGHVFSPSDAQLAQLNDGVPVSGSSGLFDLVQNMSPEQQQILLQASAASTFSGLIGNAILAGGVILIIQLVSAGQRVSALRAIGASAPILPKLFILIFLTTLLVQIGIMLVVVPGIIMAILLALAPVMLVQDKMGVFASMRSSMRLTWANMRLVAPAVLSWLLAKTLLLLFASSFAALTPEIGAVLANTLSNLISAILLIYLFRLYMLIRQ</sequence>
<keyword id="KW-0997">Cell inner membrane</keyword>
<keyword id="KW-1003">Cell membrane</keyword>
<keyword id="KW-0472">Membrane</keyword>
<keyword id="KW-0812">Transmembrane</keyword>
<keyword id="KW-1133">Transmembrane helix</keyword>
<accession>B1XBK4</accession>
<dbReference type="EMBL" id="CP000948">
    <property type="protein sequence ID" value="ACB02474.1"/>
    <property type="molecule type" value="Genomic_DNA"/>
</dbReference>
<dbReference type="RefSeq" id="WP_000028545.1">
    <property type="nucleotide sequence ID" value="NC_010473.1"/>
</dbReference>
<dbReference type="KEGG" id="ecd:ECDH10B_1370"/>
<dbReference type="HOGENOM" id="CLU_073287_0_0_6"/>
<dbReference type="GO" id="GO:0005886">
    <property type="term" value="C:plasma membrane"/>
    <property type="evidence" value="ECO:0007669"/>
    <property type="project" value="UniProtKB-SubCell"/>
</dbReference>
<dbReference type="HAMAP" id="MF_01067">
    <property type="entry name" value="UPF0259"/>
    <property type="match status" value="1"/>
</dbReference>
<dbReference type="InterPro" id="IPR009627">
    <property type="entry name" value="UPF0259"/>
</dbReference>
<dbReference type="NCBIfam" id="NF002774">
    <property type="entry name" value="PRK02868.1"/>
    <property type="match status" value="1"/>
</dbReference>
<dbReference type="Pfam" id="PF06790">
    <property type="entry name" value="UPF0259"/>
    <property type="match status" value="1"/>
</dbReference>
<organism>
    <name type="scientific">Escherichia coli (strain K12 / DH10B)</name>
    <dbReference type="NCBI Taxonomy" id="316385"/>
    <lineage>
        <taxon>Bacteria</taxon>
        <taxon>Pseudomonadati</taxon>
        <taxon>Pseudomonadota</taxon>
        <taxon>Gammaproteobacteria</taxon>
        <taxon>Enterobacterales</taxon>
        <taxon>Enterobacteriaceae</taxon>
        <taxon>Escherichia</taxon>
    </lineage>
</organism>
<reference key="1">
    <citation type="journal article" date="2008" name="J. Bacteriol.">
        <title>The complete genome sequence of Escherichia coli DH10B: insights into the biology of a laboratory workhorse.</title>
        <authorList>
            <person name="Durfee T."/>
            <person name="Nelson R."/>
            <person name="Baldwin S."/>
            <person name="Plunkett G. III"/>
            <person name="Burland V."/>
            <person name="Mau B."/>
            <person name="Petrosino J.F."/>
            <person name="Qin X."/>
            <person name="Muzny D.M."/>
            <person name="Ayele M."/>
            <person name="Gibbs R.A."/>
            <person name="Csorgo B."/>
            <person name="Posfai G."/>
            <person name="Weinstock G.M."/>
            <person name="Blattner F.R."/>
        </authorList>
    </citation>
    <scope>NUCLEOTIDE SEQUENCE [LARGE SCALE GENOMIC DNA]</scope>
    <source>
        <strain>K12 / DH10B</strain>
    </source>
</reference>
<feature type="chain" id="PRO_1000136582" description="UPF0259 membrane protein YciC">
    <location>
        <begin position="1"/>
        <end position="247"/>
    </location>
</feature>
<feature type="transmembrane region" description="Helical" evidence="1">
    <location>
        <begin position="20"/>
        <end position="40"/>
    </location>
</feature>
<feature type="transmembrane region" description="Helical" evidence="1">
    <location>
        <begin position="87"/>
        <end position="107"/>
    </location>
</feature>
<feature type="transmembrane region" description="Helical" evidence="1">
    <location>
        <begin position="118"/>
        <end position="140"/>
    </location>
</feature>
<feature type="transmembrane region" description="Helical" evidence="1">
    <location>
        <begin position="152"/>
        <end position="172"/>
    </location>
</feature>
<feature type="transmembrane region" description="Helical" evidence="1">
    <location>
        <begin position="187"/>
        <end position="209"/>
    </location>
</feature>
<feature type="transmembrane region" description="Helical" evidence="1">
    <location>
        <begin position="225"/>
        <end position="245"/>
    </location>
</feature>
<proteinExistence type="inferred from homology"/>
<gene>
    <name evidence="1" type="primary">yciC</name>
    <name type="ordered locus">ECDH10B_1370</name>
</gene>
<name>YCIC_ECODH</name>
<comment type="subcellular location">
    <subcellularLocation>
        <location evidence="1">Cell inner membrane</location>
        <topology evidence="1">Multi-pass membrane protein</topology>
    </subcellularLocation>
</comment>
<comment type="similarity">
    <text evidence="1">Belongs to the UPF0259 family.</text>
</comment>